<gene>
    <name type="primary">Ste:CG33243</name>
    <name type="ORF">CG33243</name>
</gene>
<keyword id="KW-1185">Reference proteome</keyword>
<reference key="1">
    <citation type="journal article" date="2000" name="Science">
        <title>The genome sequence of Drosophila melanogaster.</title>
        <authorList>
            <person name="Adams M.D."/>
            <person name="Celniker S.E."/>
            <person name="Holt R.A."/>
            <person name="Evans C.A."/>
            <person name="Gocayne J.D."/>
            <person name="Amanatides P.G."/>
            <person name="Scherer S.E."/>
            <person name="Li P.W."/>
            <person name="Hoskins R.A."/>
            <person name="Galle R.F."/>
            <person name="George R.A."/>
            <person name="Lewis S.E."/>
            <person name="Richards S."/>
            <person name="Ashburner M."/>
            <person name="Henderson S.N."/>
            <person name="Sutton G.G."/>
            <person name="Wortman J.R."/>
            <person name="Yandell M.D."/>
            <person name="Zhang Q."/>
            <person name="Chen L.X."/>
            <person name="Brandon R.C."/>
            <person name="Rogers Y.-H.C."/>
            <person name="Blazej R.G."/>
            <person name="Champe M."/>
            <person name="Pfeiffer B.D."/>
            <person name="Wan K.H."/>
            <person name="Doyle C."/>
            <person name="Baxter E.G."/>
            <person name="Helt G."/>
            <person name="Nelson C.R."/>
            <person name="Miklos G.L.G."/>
            <person name="Abril J.F."/>
            <person name="Agbayani A."/>
            <person name="An H.-J."/>
            <person name="Andrews-Pfannkoch C."/>
            <person name="Baldwin D."/>
            <person name="Ballew R.M."/>
            <person name="Basu A."/>
            <person name="Baxendale J."/>
            <person name="Bayraktaroglu L."/>
            <person name="Beasley E.M."/>
            <person name="Beeson K.Y."/>
            <person name="Benos P.V."/>
            <person name="Berman B.P."/>
            <person name="Bhandari D."/>
            <person name="Bolshakov S."/>
            <person name="Borkova D."/>
            <person name="Botchan M.R."/>
            <person name="Bouck J."/>
            <person name="Brokstein P."/>
            <person name="Brottier P."/>
            <person name="Burtis K.C."/>
            <person name="Busam D.A."/>
            <person name="Butler H."/>
            <person name="Cadieu E."/>
            <person name="Center A."/>
            <person name="Chandra I."/>
            <person name="Cherry J.M."/>
            <person name="Cawley S."/>
            <person name="Dahlke C."/>
            <person name="Davenport L.B."/>
            <person name="Davies P."/>
            <person name="de Pablos B."/>
            <person name="Delcher A."/>
            <person name="Deng Z."/>
            <person name="Mays A.D."/>
            <person name="Dew I."/>
            <person name="Dietz S.M."/>
            <person name="Dodson K."/>
            <person name="Doup L.E."/>
            <person name="Downes M."/>
            <person name="Dugan-Rocha S."/>
            <person name="Dunkov B.C."/>
            <person name="Dunn P."/>
            <person name="Durbin K.J."/>
            <person name="Evangelista C.C."/>
            <person name="Ferraz C."/>
            <person name="Ferriera S."/>
            <person name="Fleischmann W."/>
            <person name="Fosler C."/>
            <person name="Gabrielian A.E."/>
            <person name="Garg N.S."/>
            <person name="Gelbart W.M."/>
            <person name="Glasser K."/>
            <person name="Glodek A."/>
            <person name="Gong F."/>
            <person name="Gorrell J.H."/>
            <person name="Gu Z."/>
            <person name="Guan P."/>
            <person name="Harris M."/>
            <person name="Harris N.L."/>
            <person name="Harvey D.A."/>
            <person name="Heiman T.J."/>
            <person name="Hernandez J.R."/>
            <person name="Houck J."/>
            <person name="Hostin D."/>
            <person name="Houston K.A."/>
            <person name="Howland T.J."/>
            <person name="Wei M.-H."/>
            <person name="Ibegwam C."/>
            <person name="Jalali M."/>
            <person name="Kalush F."/>
            <person name="Karpen G.H."/>
            <person name="Ke Z."/>
            <person name="Kennison J.A."/>
            <person name="Ketchum K.A."/>
            <person name="Kimmel B.E."/>
            <person name="Kodira C.D."/>
            <person name="Kraft C.L."/>
            <person name="Kravitz S."/>
            <person name="Kulp D."/>
            <person name="Lai Z."/>
            <person name="Lasko P."/>
            <person name="Lei Y."/>
            <person name="Levitsky A.A."/>
            <person name="Li J.H."/>
            <person name="Li Z."/>
            <person name="Liang Y."/>
            <person name="Lin X."/>
            <person name="Liu X."/>
            <person name="Mattei B."/>
            <person name="McIntosh T.C."/>
            <person name="McLeod M.P."/>
            <person name="McPherson D."/>
            <person name="Merkulov G."/>
            <person name="Milshina N.V."/>
            <person name="Mobarry C."/>
            <person name="Morris J."/>
            <person name="Moshrefi A."/>
            <person name="Mount S.M."/>
            <person name="Moy M."/>
            <person name="Murphy B."/>
            <person name="Murphy L."/>
            <person name="Muzny D.M."/>
            <person name="Nelson D.L."/>
            <person name="Nelson D.R."/>
            <person name="Nelson K.A."/>
            <person name="Nixon K."/>
            <person name="Nusskern D.R."/>
            <person name="Pacleb J.M."/>
            <person name="Palazzolo M."/>
            <person name="Pittman G.S."/>
            <person name="Pan S."/>
            <person name="Pollard J."/>
            <person name="Puri V."/>
            <person name="Reese M.G."/>
            <person name="Reinert K."/>
            <person name="Remington K."/>
            <person name="Saunders R.D.C."/>
            <person name="Scheeler F."/>
            <person name="Shen H."/>
            <person name="Shue B.C."/>
            <person name="Siden-Kiamos I."/>
            <person name="Simpson M."/>
            <person name="Skupski M.P."/>
            <person name="Smith T.J."/>
            <person name="Spier E."/>
            <person name="Spradling A.C."/>
            <person name="Stapleton M."/>
            <person name="Strong R."/>
            <person name="Sun E."/>
            <person name="Svirskas R."/>
            <person name="Tector C."/>
            <person name="Turner R."/>
            <person name="Venter E."/>
            <person name="Wang A.H."/>
            <person name="Wang X."/>
            <person name="Wang Z.-Y."/>
            <person name="Wassarman D.A."/>
            <person name="Weinstock G.M."/>
            <person name="Weissenbach J."/>
            <person name="Williams S.M."/>
            <person name="Woodage T."/>
            <person name="Worley K.C."/>
            <person name="Wu D."/>
            <person name="Yang S."/>
            <person name="Yao Q.A."/>
            <person name="Ye J."/>
            <person name="Yeh R.-F."/>
            <person name="Zaveri J.S."/>
            <person name="Zhan M."/>
            <person name="Zhang G."/>
            <person name="Zhao Q."/>
            <person name="Zheng L."/>
            <person name="Zheng X.H."/>
            <person name="Zhong F.N."/>
            <person name="Zhong W."/>
            <person name="Zhou X."/>
            <person name="Zhu S.C."/>
            <person name="Zhu X."/>
            <person name="Smith H.O."/>
            <person name="Gibbs R.A."/>
            <person name="Myers E.W."/>
            <person name="Rubin G.M."/>
            <person name="Venter J.C."/>
        </authorList>
    </citation>
    <scope>NUCLEOTIDE SEQUENCE [LARGE SCALE GENOMIC DNA]</scope>
    <source>
        <strain>Berkeley</strain>
    </source>
</reference>
<reference key="2">
    <citation type="journal article" date="2002" name="Genome Biol.">
        <title>Annotation of the Drosophila melanogaster euchromatic genome: a systematic review.</title>
        <authorList>
            <person name="Misra S."/>
            <person name="Crosby M.A."/>
            <person name="Mungall C.J."/>
            <person name="Matthews B.B."/>
            <person name="Campbell K.S."/>
            <person name="Hradecky P."/>
            <person name="Huang Y."/>
            <person name="Kaminker J.S."/>
            <person name="Millburn G.H."/>
            <person name="Prochnik S.E."/>
            <person name="Smith C.D."/>
            <person name="Tupy J.L."/>
            <person name="Whitfield E.J."/>
            <person name="Bayraktaroglu L."/>
            <person name="Berman B.P."/>
            <person name="Bettencourt B.R."/>
            <person name="Celniker S.E."/>
            <person name="de Grey A.D.N.J."/>
            <person name="Drysdale R.A."/>
            <person name="Harris N.L."/>
            <person name="Richter J."/>
            <person name="Russo S."/>
            <person name="Schroeder A.J."/>
            <person name="Shu S.Q."/>
            <person name="Stapleton M."/>
            <person name="Yamada C."/>
            <person name="Ashburner M."/>
            <person name="Gelbart W.M."/>
            <person name="Rubin G.M."/>
            <person name="Lewis S.E."/>
        </authorList>
    </citation>
    <scope>GENOME REANNOTATION</scope>
    <source>
        <strain>Berkeley</strain>
    </source>
</reference>
<reference key="3">
    <citation type="journal article" date="1995" name="Proc. Natl. Acad. Sci. U.S.A.">
        <title>The Ste locus, a component of the parasitic cry-Ste system of Drosophila melanogaster, encodes a protein that forms crystals in primary spermatocytes and mimics properties of the beta subunit of casein kinase 2.</title>
        <authorList>
            <person name="Bozzetti M.P."/>
            <person name="Massari S."/>
            <person name="Finelli P."/>
            <person name="Meggio F."/>
            <person name="Pinna L.A."/>
            <person name="Boldyreff B."/>
            <person name="Issinger O.G."/>
            <person name="Palumbo G."/>
            <person name="Ciriaco C."/>
            <person name="Bonaccorsi S."/>
            <person name="Pimpinelli S."/>
        </authorList>
    </citation>
    <scope>TISSUE SPECIFICITY</scope>
    <scope>INTERACTION WITH CKII-ALPHA</scope>
</reference>
<reference key="4">
    <citation type="journal article" date="2001" name="Chromosoma">
        <title>A role of the Drosophila homeless gene in repression of Stellate in male meiosis.</title>
        <authorList>
            <person name="Stapleton W."/>
            <person name="Das S."/>
            <person name="McKee B.D."/>
        </authorList>
    </citation>
    <scope>INDUCTION</scope>
</reference>
<reference key="5">
    <citation type="journal article" date="2001" name="Curr. Biol.">
        <title>Double-stranded RNA-mediated silencing of genomic tandem repeats and transposable elements in the D. melanogaster germline.</title>
        <authorList>
            <person name="Aravin A.A."/>
            <person name="Naumova N.M."/>
            <person name="Tulin A.V."/>
            <person name="Vagin V.V."/>
            <person name="Rozovsky Y.M."/>
            <person name="Gvozdev V.A."/>
        </authorList>
    </citation>
    <scope>INDUCTION</scope>
</reference>
<proteinExistence type="evidence at protein level"/>
<dbReference type="EMBL" id="AE014298">
    <property type="protein sequence ID" value="AAS65331.2"/>
    <property type="molecule type" value="Genomic_DNA"/>
</dbReference>
<dbReference type="RefSeq" id="NP_996425.2">
    <property type="nucleotide sequence ID" value="NM_206702.2"/>
</dbReference>
<dbReference type="SMR" id="Q7KV19"/>
<dbReference type="FunCoup" id="Q7KV19">
    <property type="interactions" value="168"/>
</dbReference>
<dbReference type="STRING" id="7227.FBpp0289369"/>
<dbReference type="PaxDb" id="7227-FBpp0289369"/>
<dbReference type="EnsemblMetazoa" id="FBtr0300092">
    <property type="protein sequence ID" value="FBpp0289369"/>
    <property type="gene ID" value="FBgn0053243"/>
</dbReference>
<dbReference type="GeneID" id="2768897"/>
<dbReference type="KEGG" id="dme:Dmel_CG33243"/>
<dbReference type="UCSC" id="CG33243-RB">
    <property type="organism name" value="d. melanogaster"/>
</dbReference>
<dbReference type="AGR" id="FB:FBgn0003523"/>
<dbReference type="AGR" id="FB:FBgn0053243"/>
<dbReference type="CTD" id="2768897"/>
<dbReference type="FlyBase" id="FBgn0053243">
    <property type="gene designation" value="Ste:CG33243"/>
</dbReference>
<dbReference type="VEuPathDB" id="VectorBase:FBgn0053243"/>
<dbReference type="eggNOG" id="KOG3092">
    <property type="taxonomic scope" value="Eukaryota"/>
</dbReference>
<dbReference type="GeneTree" id="ENSGT00390000003781"/>
<dbReference type="HOGENOM" id="CLU_034027_3_3_1"/>
<dbReference type="InParanoid" id="Q7KV19"/>
<dbReference type="OrthoDB" id="3971593at2759"/>
<dbReference type="PhylomeDB" id="Q7KV19"/>
<dbReference type="GenomeRNAi" id="2768897"/>
<dbReference type="PRO" id="PR:Q7KV19"/>
<dbReference type="Proteomes" id="UP000000803">
    <property type="component" value="Chromosome X"/>
</dbReference>
<dbReference type="GO" id="GO:0005737">
    <property type="term" value="C:cytoplasm"/>
    <property type="evidence" value="ECO:0000314"/>
    <property type="project" value="FlyBase"/>
</dbReference>
<dbReference type="GO" id="GO:0005634">
    <property type="term" value="C:nucleus"/>
    <property type="evidence" value="ECO:0000314"/>
    <property type="project" value="FlyBase"/>
</dbReference>
<dbReference type="GO" id="GO:0005956">
    <property type="term" value="C:protein kinase CK2 complex"/>
    <property type="evidence" value="ECO:0000314"/>
    <property type="project" value="FlyBase"/>
</dbReference>
<dbReference type="GO" id="GO:0019887">
    <property type="term" value="F:protein kinase regulator activity"/>
    <property type="evidence" value="ECO:0000315"/>
    <property type="project" value="FlyBase"/>
</dbReference>
<dbReference type="FunFam" id="1.10.1820.10:FF:000005">
    <property type="entry name" value="Casein kinase II subunit beta"/>
    <property type="match status" value="1"/>
</dbReference>
<dbReference type="FunFam" id="2.20.25.20:FF:000001">
    <property type="entry name" value="Casein kinase II subunit beta"/>
    <property type="match status" value="1"/>
</dbReference>
<dbReference type="Gene3D" id="2.20.25.20">
    <property type="match status" value="1"/>
</dbReference>
<dbReference type="Gene3D" id="1.10.1820.10">
    <property type="entry name" value="protein kinase ck2 holoenzyme, chain C, domain 1"/>
    <property type="match status" value="1"/>
</dbReference>
<dbReference type="InterPro" id="IPR016149">
    <property type="entry name" value="Casein_kin_II_reg-sub_N"/>
</dbReference>
<dbReference type="InterPro" id="IPR035991">
    <property type="entry name" value="Casein_kinase_II_beta-like"/>
</dbReference>
<dbReference type="InterPro" id="IPR000704">
    <property type="entry name" value="Casein_kinase_II_reg-sub"/>
</dbReference>
<dbReference type="PANTHER" id="PTHR11740">
    <property type="entry name" value="CASEIN KINASE II SUBUNIT BETA"/>
    <property type="match status" value="1"/>
</dbReference>
<dbReference type="PANTHER" id="PTHR11740:SF0">
    <property type="entry name" value="CASEIN KINASE II SUBUNIT BETA"/>
    <property type="match status" value="1"/>
</dbReference>
<dbReference type="Pfam" id="PF01214">
    <property type="entry name" value="CK_II_beta"/>
    <property type="match status" value="1"/>
</dbReference>
<dbReference type="PRINTS" id="PR00472">
    <property type="entry name" value="CASNKINASEII"/>
</dbReference>
<dbReference type="SMART" id="SM01085">
    <property type="entry name" value="CK_II_beta"/>
    <property type="match status" value="1"/>
</dbReference>
<dbReference type="SUPFAM" id="SSF57798">
    <property type="entry name" value="Casein kinase II beta subunit"/>
    <property type="match status" value="1"/>
</dbReference>
<dbReference type="PROSITE" id="PS01101">
    <property type="entry name" value="CK2_BETA"/>
    <property type="match status" value="1"/>
</dbReference>
<evidence type="ECO:0000269" key="1">
    <source>
    </source>
</evidence>
<evidence type="ECO:0000269" key="2">
    <source>
    </source>
</evidence>
<evidence type="ECO:0000269" key="3">
    <source>
    </source>
</evidence>
<evidence type="ECO:0000305" key="4"/>
<name>STEL5_DROME</name>
<comment type="function">
    <text>Unknown. In males lacking the Y chromosome, its strong overexpression leads to the appearance of proteinaceous star-shaped crystals in the primary spermatocytes causing meiotic drive, possibly by interfering with normal casein kinase 2 activity.</text>
</comment>
<comment type="subunit">
    <text evidence="3">Interacts in vitro with the casein kinase 2 alpha subunit (CkII-alpha). The relevance of such interaction is however unclear in vivo.</text>
</comment>
<comment type="tissue specificity">
    <text evidence="3">Probably not expressed in wild-type flies. In males lacking the Y chromosome, it is testis-specific and constitutes the main component of star-shaped crystals.</text>
</comment>
<comment type="induction">
    <text evidence="1 2">In wild-type flies, it is strongly down-regulated by double-stranded RNA (dsRNA) interference mediated by Su(Ste) transcripts. In males lacking the Y chromosome, the absence of Su(Ste) locus, relieves such down-regulation, explaining why it is strongly expressed.</text>
</comment>
<comment type="miscellaneous">
    <text>There are multiple copies of the stellate gene in fruit fly, encoding proteins that are extremely similar, which makes their individual characterization difficult. Thus, most experiments probably do not discriminate between the different members.</text>
</comment>
<comment type="similarity">
    <text evidence="4">Belongs to the casein kinase 2 subunit beta family.</text>
</comment>
<sequence>MSSSQNNNSSWIDWFLGIKGNQFLCRVPTDYVQDTFNQMGLEYFSEILDVILKPVIDSSSGLLYGDEKKWYGMIHARYIRSERGLIAMHRKYLRGDFGSCPNISCYRQNTLPVGLSAVWGKSTVKIHCPRCKSNFHPKSDTQLDGAMFGPSFPDIFFSMLPNLTSPLDDPRT</sequence>
<protein>
    <recommendedName>
        <fullName>Stellate protein CG33243</fullName>
    </recommendedName>
</protein>
<organism>
    <name type="scientific">Drosophila melanogaster</name>
    <name type="common">Fruit fly</name>
    <dbReference type="NCBI Taxonomy" id="7227"/>
    <lineage>
        <taxon>Eukaryota</taxon>
        <taxon>Metazoa</taxon>
        <taxon>Ecdysozoa</taxon>
        <taxon>Arthropoda</taxon>
        <taxon>Hexapoda</taxon>
        <taxon>Insecta</taxon>
        <taxon>Pterygota</taxon>
        <taxon>Neoptera</taxon>
        <taxon>Endopterygota</taxon>
        <taxon>Diptera</taxon>
        <taxon>Brachycera</taxon>
        <taxon>Muscomorpha</taxon>
        <taxon>Ephydroidea</taxon>
        <taxon>Drosophilidae</taxon>
        <taxon>Drosophila</taxon>
        <taxon>Sophophora</taxon>
    </lineage>
</organism>
<feature type="chain" id="PRO_0000068265" description="Stellate protein CG33243">
    <location>
        <begin position="1"/>
        <end position="172"/>
    </location>
</feature>
<accession>Q7KV19</accession>